<comment type="function">
    <text evidence="1">Catalyzes oxygen-dependent 5-hydroxyuridine (ho5U) modification at position 34 in tRNAs.</text>
</comment>
<comment type="catalytic activity">
    <reaction evidence="1">
        <text>uridine(34) in tRNA + AH2 + O2 = 5-hydroxyuridine(34) in tRNA + A + H2O</text>
        <dbReference type="Rhea" id="RHEA:64224"/>
        <dbReference type="Rhea" id="RHEA-COMP:11727"/>
        <dbReference type="Rhea" id="RHEA-COMP:13381"/>
        <dbReference type="ChEBI" id="CHEBI:13193"/>
        <dbReference type="ChEBI" id="CHEBI:15377"/>
        <dbReference type="ChEBI" id="CHEBI:15379"/>
        <dbReference type="ChEBI" id="CHEBI:17499"/>
        <dbReference type="ChEBI" id="CHEBI:65315"/>
        <dbReference type="ChEBI" id="CHEBI:136877"/>
    </reaction>
</comment>
<comment type="similarity">
    <text evidence="1">Belongs to the TrhO family.</text>
</comment>
<reference key="1">
    <citation type="journal article" date="2004" name="Nat. Biotechnol.">
        <title>Complete sequence and comparative genome analysis of the dairy bacterium Streptococcus thermophilus.</title>
        <authorList>
            <person name="Bolotin A."/>
            <person name="Quinquis B."/>
            <person name="Renault P."/>
            <person name="Sorokin A."/>
            <person name="Ehrlich S.D."/>
            <person name="Kulakauskas S."/>
            <person name="Lapidus A."/>
            <person name="Goltsman E."/>
            <person name="Mazur M."/>
            <person name="Pusch G.D."/>
            <person name="Fonstein M."/>
            <person name="Overbeek R."/>
            <person name="Kyprides N."/>
            <person name="Purnelle B."/>
            <person name="Prozzi D."/>
            <person name="Ngui K."/>
            <person name="Masuy D."/>
            <person name="Hancy F."/>
            <person name="Burteau S."/>
            <person name="Boutry M."/>
            <person name="Delcour J."/>
            <person name="Goffeau A."/>
            <person name="Hols P."/>
        </authorList>
    </citation>
    <scope>NUCLEOTIDE SEQUENCE [LARGE SCALE GENOMIC DNA]</scope>
    <source>
        <strain>ATCC BAA-250 / LMG 18311</strain>
    </source>
</reference>
<evidence type="ECO:0000255" key="1">
    <source>
        <dbReference type="HAMAP-Rule" id="MF_00469"/>
    </source>
</evidence>
<proteinExistence type="inferred from homology"/>
<accession>Q5M5E1</accession>
<keyword id="KW-0560">Oxidoreductase</keyword>
<keyword id="KW-1185">Reference proteome</keyword>
<keyword id="KW-0819">tRNA processing</keyword>
<dbReference type="EC" id="1.14.-.-" evidence="1"/>
<dbReference type="EMBL" id="CP000023">
    <property type="protein sequence ID" value="AAV60254.1"/>
    <property type="molecule type" value="Genomic_DNA"/>
</dbReference>
<dbReference type="RefSeq" id="WP_011225645.1">
    <property type="nucleotide sequence ID" value="NC_006448.1"/>
</dbReference>
<dbReference type="SMR" id="Q5M5E1"/>
<dbReference type="STRING" id="264199.stu0548"/>
<dbReference type="KEGG" id="stl:stu0548"/>
<dbReference type="PATRIC" id="fig|264199.4.peg.550"/>
<dbReference type="eggNOG" id="COG1054">
    <property type="taxonomic scope" value="Bacteria"/>
</dbReference>
<dbReference type="HOGENOM" id="CLU_038878_1_0_9"/>
<dbReference type="Proteomes" id="UP000001170">
    <property type="component" value="Chromosome"/>
</dbReference>
<dbReference type="GO" id="GO:0016705">
    <property type="term" value="F:oxidoreductase activity, acting on paired donors, with incorporation or reduction of molecular oxygen"/>
    <property type="evidence" value="ECO:0007669"/>
    <property type="project" value="UniProtKB-UniRule"/>
</dbReference>
<dbReference type="GO" id="GO:0006400">
    <property type="term" value="P:tRNA modification"/>
    <property type="evidence" value="ECO:0007669"/>
    <property type="project" value="UniProtKB-UniRule"/>
</dbReference>
<dbReference type="CDD" id="cd01518">
    <property type="entry name" value="RHOD_YceA"/>
    <property type="match status" value="1"/>
</dbReference>
<dbReference type="Gene3D" id="3.30.70.100">
    <property type="match status" value="1"/>
</dbReference>
<dbReference type="Gene3D" id="3.40.250.10">
    <property type="entry name" value="Rhodanese-like domain"/>
    <property type="match status" value="1"/>
</dbReference>
<dbReference type="HAMAP" id="MF_00469">
    <property type="entry name" value="TrhO"/>
    <property type="match status" value="1"/>
</dbReference>
<dbReference type="InterPro" id="IPR001763">
    <property type="entry name" value="Rhodanese-like_dom"/>
</dbReference>
<dbReference type="InterPro" id="IPR036873">
    <property type="entry name" value="Rhodanese-like_dom_sf"/>
</dbReference>
<dbReference type="InterPro" id="IPR022111">
    <property type="entry name" value="Rhodanese_C"/>
</dbReference>
<dbReference type="InterPro" id="IPR020936">
    <property type="entry name" value="TrhO"/>
</dbReference>
<dbReference type="InterPro" id="IPR040503">
    <property type="entry name" value="TRHO_N"/>
</dbReference>
<dbReference type="NCBIfam" id="NF001135">
    <property type="entry name" value="PRK00142.1-3"/>
    <property type="match status" value="1"/>
</dbReference>
<dbReference type="NCBIfam" id="NF001137">
    <property type="entry name" value="PRK00142.1-5"/>
    <property type="match status" value="1"/>
</dbReference>
<dbReference type="PANTHER" id="PTHR43268:SF3">
    <property type="entry name" value="RHODANESE-LIKE DOMAIN-CONTAINING PROTEIN 7-RELATED"/>
    <property type="match status" value="1"/>
</dbReference>
<dbReference type="PANTHER" id="PTHR43268">
    <property type="entry name" value="THIOSULFATE SULFURTRANSFERASE/RHODANESE-LIKE DOMAIN-CONTAINING PROTEIN 2"/>
    <property type="match status" value="1"/>
</dbReference>
<dbReference type="Pfam" id="PF00581">
    <property type="entry name" value="Rhodanese"/>
    <property type="match status" value="1"/>
</dbReference>
<dbReference type="Pfam" id="PF12368">
    <property type="entry name" value="Rhodanese_C"/>
    <property type="match status" value="1"/>
</dbReference>
<dbReference type="Pfam" id="PF17773">
    <property type="entry name" value="UPF0176_N"/>
    <property type="match status" value="1"/>
</dbReference>
<dbReference type="SMART" id="SM00450">
    <property type="entry name" value="RHOD"/>
    <property type="match status" value="1"/>
</dbReference>
<dbReference type="SUPFAM" id="SSF52821">
    <property type="entry name" value="Rhodanese/Cell cycle control phosphatase"/>
    <property type="match status" value="1"/>
</dbReference>
<dbReference type="PROSITE" id="PS50206">
    <property type="entry name" value="RHODANESE_3"/>
    <property type="match status" value="1"/>
</dbReference>
<sequence>MAKPIRVLLYYKYVPIENAEQFAADHLAFCKSIGLKGRILVADEGINGTVSGEYETTQKYMDYVHSLPGMEDLWFKIDEEEEQAFKKMFVRYKKEIVHLGLEDNNFDSDINPLETTGAYLSPKEFKDALLDEDTVVLDTRNDYEYDLGHFRGAIRPDIRNFRELPQWVRDHKEEFMDKRVVVYCTGGVRCEKFSGWLVREGYKDVGQLHGGIVTYGKDPEVQGELWDGKLYVFDERIAVDVNHVDPIVVGKDWFDGTPCERYVNCGNPFCNRRILTSEENEDKYLRGCSHECRVHPRNRYVSENDLSQEEVVERLAAIGESLDVTPA</sequence>
<name>TRHO_STRT2</name>
<feature type="chain" id="PRO_0000161530" description="tRNA uridine(34) hydroxylase">
    <location>
        <begin position="1"/>
        <end position="327"/>
    </location>
</feature>
<feature type="domain" description="Rhodanese" evidence="1">
    <location>
        <begin position="130"/>
        <end position="224"/>
    </location>
</feature>
<feature type="active site" description="Cysteine persulfide intermediate" evidence="1">
    <location>
        <position position="184"/>
    </location>
</feature>
<protein>
    <recommendedName>
        <fullName evidence="1">tRNA uridine(34) hydroxylase</fullName>
        <ecNumber evidence="1">1.14.-.-</ecNumber>
    </recommendedName>
    <alternativeName>
        <fullName evidence="1">tRNA hydroxylation protein O</fullName>
    </alternativeName>
</protein>
<gene>
    <name evidence="1" type="primary">trhO</name>
    <name type="ordered locus">stu0548</name>
</gene>
<organism>
    <name type="scientific">Streptococcus thermophilus (strain ATCC BAA-250 / LMG 18311)</name>
    <dbReference type="NCBI Taxonomy" id="264199"/>
    <lineage>
        <taxon>Bacteria</taxon>
        <taxon>Bacillati</taxon>
        <taxon>Bacillota</taxon>
        <taxon>Bacilli</taxon>
        <taxon>Lactobacillales</taxon>
        <taxon>Streptococcaceae</taxon>
        <taxon>Streptococcus</taxon>
    </lineage>
</organism>